<accession>P0AC13</accession>
<accession>P26282</accession>
<accession>P78110</accession>
<accession>Q2M935</accession>
<reference key="1">
    <citation type="journal article" date="1993" name="Adv. Exp. Med. Biol.">
        <title>Point mutations in the dihydropteroate synthase gene causing sulfonamide resistance.</title>
        <authorList>
            <person name="Swedberg G."/>
            <person name="Fermer C."/>
            <person name="Skoeld O."/>
        </authorList>
    </citation>
    <scope>NUCLEOTIDE SEQUENCE [GENOMIC DNA]</scope>
    <source>
        <strain>C-167</strain>
    </source>
</reference>
<reference key="2">
    <citation type="journal article" date="1992" name="J. Bacteriol.">
        <title>Cloning, sequencing, and enhanced expression of the dihydropteroate synthase gene of Escherichia coli MC4100.</title>
        <authorList>
            <person name="Dallas W.S."/>
            <person name="Gowen J.E."/>
            <person name="Ray P.H."/>
            <person name="Cox M.J."/>
            <person name="Dev I.K."/>
        </authorList>
    </citation>
    <scope>NUCLEOTIDE SEQUENCE [GENOMIC DNA]</scope>
    <source>
        <strain>K12 / W3110 / ATCC 27325 / DSM 5911</strain>
    </source>
</reference>
<reference key="3">
    <citation type="submission" date="1993-09" db="EMBL/GenBank/DDBJ databases">
        <authorList>
            <person name="Wang R."/>
            <person name="Kushner S.R."/>
        </authorList>
    </citation>
    <scope>NUCLEOTIDE SEQUENCE [GENOMIC DNA]</scope>
    <source>
        <strain>K12</strain>
    </source>
</reference>
<reference key="4">
    <citation type="journal article" date="1997" name="Science">
        <title>The complete genome sequence of Escherichia coli K-12.</title>
        <authorList>
            <person name="Blattner F.R."/>
            <person name="Plunkett G. III"/>
            <person name="Bloch C.A."/>
            <person name="Perna N.T."/>
            <person name="Burland V."/>
            <person name="Riley M."/>
            <person name="Collado-Vides J."/>
            <person name="Glasner J.D."/>
            <person name="Rode C.K."/>
            <person name="Mayhew G.F."/>
            <person name="Gregor J."/>
            <person name="Davis N.W."/>
            <person name="Kirkpatrick H.A."/>
            <person name="Goeden M.A."/>
            <person name="Rose D.J."/>
            <person name="Mau B."/>
            <person name="Shao Y."/>
        </authorList>
    </citation>
    <scope>NUCLEOTIDE SEQUENCE [LARGE SCALE GENOMIC DNA]</scope>
    <source>
        <strain>K12 / MG1655 / ATCC 47076</strain>
    </source>
</reference>
<reference key="5">
    <citation type="journal article" date="2006" name="Mol. Syst. Biol.">
        <title>Highly accurate genome sequences of Escherichia coli K-12 strains MG1655 and W3110.</title>
        <authorList>
            <person name="Hayashi K."/>
            <person name="Morooka N."/>
            <person name="Yamamoto Y."/>
            <person name="Fujita K."/>
            <person name="Isono K."/>
            <person name="Choi S."/>
            <person name="Ohtsubo E."/>
            <person name="Baba T."/>
            <person name="Wanner B.L."/>
            <person name="Mori H."/>
            <person name="Horiuchi T."/>
        </authorList>
    </citation>
    <scope>NUCLEOTIDE SEQUENCE [LARGE SCALE GENOMIC DNA]</scope>
    <source>
        <strain>K12 / W3110 / ATCC 27325 / DSM 5911</strain>
    </source>
</reference>
<reference key="6">
    <citation type="journal article" date="1991" name="J. Bacteriol.">
        <title>Purification and partial characterization of 7,8-dihydro-6-hydroxymethylpterin-pyrophosphokinase and 7,8-dihydropteroate synthase from Escherichia coli MC4100.</title>
        <authorList>
            <person name="Talarico T.L."/>
            <person name="Dev I.K."/>
            <person name="Dallas W.S."/>
            <person name="Ferone R."/>
            <person name="Ray P.H."/>
        </authorList>
    </citation>
    <scope>PROTEIN SEQUENCE OF 1-28</scope>
    <source>
        <strain>K12 / MC4100 / ATCC 35695 / DSM 6574</strain>
    </source>
</reference>
<reference key="7">
    <citation type="journal article" date="1969" name="J. Biol. Chem.">
        <title>The biosynthesis of folic acid. IX. Purification and properties of the enzymes required for the formation of dihydropteroic acid.</title>
        <authorList>
            <person name="Richey D.P."/>
            <person name="Brown G.M."/>
        </authorList>
    </citation>
    <scope>CATALYTIC ACTIVITY</scope>
    <scope>COFACTOR</scope>
    <scope>BIOPHYSICOCHEMICAL PROPERTIES</scope>
    <scope>SUBUNIT</scope>
</reference>
<reference key="8">
    <citation type="journal article" date="1979" name="J. Bacteriol.">
        <title>Characterization of mutationally altered dihydropteroate synthase and its ability to form a sulfonamide-containing dihydrofolate analog.</title>
        <authorList>
            <person name="Swedberg G."/>
            <person name="Castensson S."/>
            <person name="Skold O."/>
        </authorList>
    </citation>
    <scope>CATALYTIC ACTIVITY</scope>
    <scope>FUNCTION</scope>
    <source>
        <strain>C-167</strain>
    </source>
</reference>
<reference key="9">
    <citation type="journal article" date="1997" name="Nat. Struct. Biol.">
        <title>Crystal structure of the anti-bacterial sulfonamide drug target dihydropteroate synthase.</title>
        <authorList>
            <person name="Achari A."/>
            <person name="Somers D.O."/>
            <person name="Champness J.N."/>
            <person name="Bryant P.K."/>
            <person name="Rosemond J."/>
            <person name="Stammers D.K."/>
        </authorList>
    </citation>
    <scope>X-RAY CRYSTALLOGRAPHY (2.0 ANGSTROMS) IN COMPLEXES WITH SUBSTRATE; SULFANILAMIDE AND SUBSTRATE ANALOG</scope>
    <scope>SUBUNIT</scope>
</reference>
<reference evidence="13 14 15 16 17 18 19 20 21 22 23" key="10">
    <citation type="journal article" date="2018" name="Chemistry">
        <title>8-Mercaptoguanine Derivatives as Inhibitors of Dihydropteroate Synthase.</title>
        <authorList>
            <person name="Dennis M.L."/>
            <person name="Lee M.D."/>
            <person name="Harjani J.R."/>
            <person name="Ahmed M."/>
            <person name="DeBono A.J."/>
            <person name="Pitcher N.P."/>
            <person name="Wang Z.C."/>
            <person name="Chhabra S."/>
            <person name="Barlow N."/>
            <person name="Rahmani R."/>
            <person name="Cleary B."/>
            <person name="Dolezal O."/>
            <person name="Hattarki M."/>
            <person name="Aurelio L."/>
            <person name="Shonberg J."/>
            <person name="Graham B."/>
            <person name="Peat T.S."/>
            <person name="Baell J.B."/>
            <person name="Swarbrick J.D."/>
        </authorList>
    </citation>
    <scope>X-RAY CRYSTALLOGRAPHY (1.70 ANGSTROMS)</scope>
    <scope>ACTIVITY REGULATION</scope>
</reference>
<reference evidence="24" key="11">
    <citation type="journal article" date="2023" name="Nat. Commun.">
        <title>Molecular mechanism of plasmid-borne resistance to sulfonamide antibiotics.</title>
        <authorList>
            <person name="Venkatesan M."/>
            <person name="Fruci M."/>
            <person name="Verellen L.A."/>
            <person name="Skarina T."/>
            <person name="Mesa N."/>
            <person name="Flick R."/>
            <person name="Pham C."/>
            <person name="Mahadevan R."/>
            <person name="Stogios P.J."/>
            <person name="Savchenko A."/>
        </authorList>
    </citation>
    <scope>X-RAY CRYSTALLOGRAPHY (2.73 ANGSTROMS) OF MUTANT GLY-PHE-190 INS</scope>
    <scope>FUNCTION</scope>
    <scope>CATALYTIC ACTIVITY</scope>
    <scope>ACTIVITY REGULATION</scope>
    <scope>BIOPHYSICOCHEMICAL PROPERTIES</scope>
    <scope>MUTAGENESIS OF THR-62 AND GLY-189</scope>
</reference>
<keyword id="KW-0002">3D-structure</keyword>
<keyword id="KW-0903">Direct protein sequencing</keyword>
<keyword id="KW-0289">Folate biosynthesis</keyword>
<keyword id="KW-0460">Magnesium</keyword>
<keyword id="KW-0479">Metal-binding</keyword>
<keyword id="KW-1185">Reference proteome</keyword>
<keyword id="KW-0808">Transferase</keyword>
<dbReference type="EC" id="2.5.1.15" evidence="4 5"/>
<dbReference type="EMBL" id="X68776">
    <property type="protein sequence ID" value="CAA48676.1"/>
    <property type="molecule type" value="Genomic_DNA"/>
</dbReference>
<dbReference type="EMBL" id="X68777">
    <property type="protein sequence ID" value="CAA48677.1"/>
    <property type="molecule type" value="Genomic_DNA"/>
</dbReference>
<dbReference type="EMBL" id="L06494">
    <property type="protein sequence ID" value="AAA23804.1"/>
    <property type="molecule type" value="Genomic_DNA"/>
</dbReference>
<dbReference type="EMBL" id="L12968">
    <property type="protein sequence ID" value="AAA16123.1"/>
    <property type="molecule type" value="Unassigned_DNA"/>
</dbReference>
<dbReference type="EMBL" id="U01376">
    <property type="protein sequence ID" value="AAA97509.1"/>
    <property type="molecule type" value="Genomic_DNA"/>
</dbReference>
<dbReference type="EMBL" id="U18997">
    <property type="protein sequence ID" value="AAA57978.1"/>
    <property type="status" value="ALT_INIT"/>
    <property type="molecule type" value="Genomic_DNA"/>
</dbReference>
<dbReference type="EMBL" id="U00096">
    <property type="protein sequence ID" value="AAC76209.2"/>
    <property type="molecule type" value="Genomic_DNA"/>
</dbReference>
<dbReference type="EMBL" id="AP009048">
    <property type="protein sequence ID" value="BAE77221.1"/>
    <property type="molecule type" value="Genomic_DNA"/>
</dbReference>
<dbReference type="PIR" id="A43326">
    <property type="entry name" value="A43326"/>
</dbReference>
<dbReference type="RefSeq" id="NP_417644.4">
    <property type="nucleotide sequence ID" value="NC_000913.3"/>
</dbReference>
<dbReference type="RefSeq" id="WP_000764731.1">
    <property type="nucleotide sequence ID" value="NZ_STEB01000012.1"/>
</dbReference>
<dbReference type="PDB" id="1AJ0">
    <property type="method" value="X-ray"/>
    <property type="resolution" value="2.00 A"/>
    <property type="chains" value="A=1-282"/>
</dbReference>
<dbReference type="PDB" id="1AJ2">
    <property type="method" value="X-ray"/>
    <property type="resolution" value="2.00 A"/>
    <property type="chains" value="A=1-282"/>
</dbReference>
<dbReference type="PDB" id="1AJZ">
    <property type="method" value="X-ray"/>
    <property type="resolution" value="2.00 A"/>
    <property type="chains" value="A=1-282"/>
</dbReference>
<dbReference type="PDB" id="5U0V">
    <property type="method" value="X-ray"/>
    <property type="resolution" value="1.70 A"/>
    <property type="chains" value="A/B=1-282"/>
</dbReference>
<dbReference type="PDB" id="5U0W">
    <property type="method" value="X-ray"/>
    <property type="resolution" value="1.97 A"/>
    <property type="chains" value="A/B=1-282"/>
</dbReference>
<dbReference type="PDB" id="5U0Y">
    <property type="method" value="X-ray"/>
    <property type="resolution" value="1.88 A"/>
    <property type="chains" value="A/B=1-282"/>
</dbReference>
<dbReference type="PDB" id="5U0Z">
    <property type="method" value="X-ray"/>
    <property type="resolution" value="2.29 A"/>
    <property type="chains" value="A/B=1-282"/>
</dbReference>
<dbReference type="PDB" id="5U10">
    <property type="method" value="X-ray"/>
    <property type="resolution" value="2.04 A"/>
    <property type="chains" value="A/B=1-282"/>
</dbReference>
<dbReference type="PDB" id="5U11">
    <property type="method" value="X-ray"/>
    <property type="resolution" value="1.99 A"/>
    <property type="chains" value="A/B=1-282"/>
</dbReference>
<dbReference type="PDB" id="5U12">
    <property type="method" value="X-ray"/>
    <property type="resolution" value="1.84 A"/>
    <property type="chains" value="A/B=1-282"/>
</dbReference>
<dbReference type="PDB" id="5U13">
    <property type="method" value="X-ray"/>
    <property type="resolution" value="1.95 A"/>
    <property type="chains" value="A/B=1-282"/>
</dbReference>
<dbReference type="PDB" id="5U14">
    <property type="method" value="X-ray"/>
    <property type="resolution" value="1.95 A"/>
    <property type="chains" value="A/B=1-282"/>
</dbReference>
<dbReference type="PDB" id="5V79">
    <property type="method" value="X-ray"/>
    <property type="resolution" value="2.25 A"/>
    <property type="chains" value="A/B=1-282"/>
</dbReference>
<dbReference type="PDB" id="5V7A">
    <property type="method" value="X-ray"/>
    <property type="resolution" value="2.35 A"/>
    <property type="chains" value="A/B=1-282"/>
</dbReference>
<dbReference type="PDB" id="7TQ1">
    <property type="method" value="X-ray"/>
    <property type="resolution" value="2.73 A"/>
    <property type="chains" value="A/B=1-282"/>
</dbReference>
<dbReference type="PDBsum" id="1AJ0"/>
<dbReference type="PDBsum" id="1AJ2"/>
<dbReference type="PDBsum" id="1AJZ"/>
<dbReference type="PDBsum" id="5U0V"/>
<dbReference type="PDBsum" id="5U0W"/>
<dbReference type="PDBsum" id="5U0Y"/>
<dbReference type="PDBsum" id="5U0Z"/>
<dbReference type="PDBsum" id="5U10"/>
<dbReference type="PDBsum" id="5U11"/>
<dbReference type="PDBsum" id="5U12"/>
<dbReference type="PDBsum" id="5U13"/>
<dbReference type="PDBsum" id="5U14"/>
<dbReference type="PDBsum" id="5V79"/>
<dbReference type="PDBsum" id="5V7A"/>
<dbReference type="PDBsum" id="7TQ1"/>
<dbReference type="SMR" id="P0AC13"/>
<dbReference type="BioGRID" id="4261486">
    <property type="interactions" value="17"/>
</dbReference>
<dbReference type="DIP" id="DIP-47922N"/>
<dbReference type="FunCoup" id="P0AC13">
    <property type="interactions" value="665"/>
</dbReference>
<dbReference type="IntAct" id="P0AC13">
    <property type="interactions" value="1"/>
</dbReference>
<dbReference type="STRING" id="511145.b3177"/>
<dbReference type="BindingDB" id="P0AC13"/>
<dbReference type="ChEMBL" id="CHEMBL2364668"/>
<dbReference type="ChEMBL" id="CHEMBL4032"/>
<dbReference type="DrugBank" id="DB04047">
    <property type="generic name" value="6-hydroxymethylpterin diphosphate"/>
</dbReference>
<dbReference type="DrugBank" id="DB03705">
    <property type="generic name" value="6-Methylamino-5-Nitroisocytosine"/>
</dbReference>
<dbReference type="DrugBank" id="DB14033">
    <property type="generic name" value="Acetyl sulfisoxazole"/>
</dbReference>
<dbReference type="DrugBank" id="DB13667">
    <property type="generic name" value="Cefozopran"/>
</dbReference>
<dbReference type="DrugBank" id="DB01111">
    <property type="generic name" value="Colistimethate"/>
</dbReference>
<dbReference type="DrugBank" id="DB00803">
    <property type="generic name" value="Colistin"/>
</dbReference>
<dbReference type="DrugBank" id="DB00080">
    <property type="generic name" value="Daptomycin"/>
</dbReference>
<dbReference type="DrugBank" id="DB06211">
    <property type="generic name" value="Doripenem"/>
</dbReference>
<dbReference type="DrugBank" id="DB14189">
    <property type="generic name" value="Ethylenediamine"/>
</dbReference>
<dbReference type="DrugBank" id="DB12190">
    <property type="generic name" value="Faropenem"/>
</dbReference>
<dbReference type="DrugBank" id="DB00027">
    <property type="generic name" value="Gramicidin D"/>
</dbReference>
<dbReference type="DrugBank" id="DB04911">
    <property type="generic name" value="Oritavancin"/>
</dbReference>
<dbReference type="DrugBank" id="DB00781">
    <property type="generic name" value="Polymyxin B"/>
</dbReference>
<dbReference type="DrugBank" id="DB03592">
    <property type="generic name" value="Pterin-6-Yl-Methyl-Monophosphate"/>
</dbReference>
<dbReference type="DrugBank" id="DB04196">
    <property type="generic name" value="Pteroic acid"/>
</dbReference>
<dbReference type="DrugBank" id="DB05245">
    <property type="generic name" value="Silver sulfadiazine"/>
</dbReference>
<dbReference type="DrugBank" id="DB00634">
    <property type="generic name" value="Sulfacetamide"/>
</dbReference>
<dbReference type="DrugBank" id="DB01298">
    <property type="generic name" value="Sulfacytine"/>
</dbReference>
<dbReference type="DrugBank" id="DB00359">
    <property type="generic name" value="Sulfadiazine"/>
</dbReference>
<dbReference type="DrugBank" id="DB01299">
    <property type="generic name" value="Sulfadoxine"/>
</dbReference>
<dbReference type="DrugBank" id="DB01581">
    <property type="generic name" value="Sulfamerazine"/>
</dbReference>
<dbReference type="DrugBank" id="DB06821">
    <property type="generic name" value="Sulfameter"/>
</dbReference>
<dbReference type="DrugBank" id="DB01582">
    <property type="generic name" value="Sulfamethazine"/>
</dbReference>
<dbReference type="DrugBank" id="DB00576">
    <property type="generic name" value="Sulfamethizole"/>
</dbReference>
<dbReference type="DrugBank" id="DB01015">
    <property type="generic name" value="Sulfamethoxazole"/>
</dbReference>
<dbReference type="DrugBank" id="DB00664">
    <property type="generic name" value="Sulfametopyrazine"/>
</dbReference>
<dbReference type="DrugBank" id="DB00259">
    <property type="generic name" value="Sulfanilamide"/>
</dbReference>
<dbReference type="DrugBank" id="DB06729">
    <property type="generic name" value="Sulfaphenazole"/>
</dbReference>
<dbReference type="DrugBank" id="DB00891">
    <property type="generic name" value="Sulfapyridine"/>
</dbReference>
<dbReference type="DrugBank" id="DB00263">
    <property type="generic name" value="Sulfisoxazole"/>
</dbReference>
<dbReference type="DrugCentral" id="P0AC13"/>
<dbReference type="jPOST" id="P0AC13"/>
<dbReference type="PaxDb" id="511145-b3177"/>
<dbReference type="EnsemblBacteria" id="AAC76209">
    <property type="protein sequence ID" value="AAC76209"/>
    <property type="gene ID" value="b3177"/>
</dbReference>
<dbReference type="GeneID" id="93778804"/>
<dbReference type="GeneID" id="947691"/>
<dbReference type="KEGG" id="ecj:JW3144"/>
<dbReference type="KEGG" id="eco:b3177"/>
<dbReference type="KEGG" id="ecoc:C3026_17300"/>
<dbReference type="PATRIC" id="fig|1411691.4.peg.3555"/>
<dbReference type="EchoBASE" id="EB4304"/>
<dbReference type="eggNOG" id="COG0294">
    <property type="taxonomic scope" value="Bacteria"/>
</dbReference>
<dbReference type="HOGENOM" id="CLU_008023_0_3_6"/>
<dbReference type="InParanoid" id="P0AC13"/>
<dbReference type="OMA" id="FATPRDC"/>
<dbReference type="OrthoDB" id="9811744at2"/>
<dbReference type="PhylomeDB" id="P0AC13"/>
<dbReference type="BioCyc" id="EcoCyc:H2PTEROATESYNTH-MONOMER"/>
<dbReference type="BioCyc" id="MetaCyc:H2PTEROATESYNTH-MONOMER"/>
<dbReference type="BRENDA" id="2.5.1.15">
    <property type="organism ID" value="2026"/>
</dbReference>
<dbReference type="SABIO-RK" id="P0AC13"/>
<dbReference type="UniPathway" id="UPA00077">
    <property type="reaction ID" value="UER00156"/>
</dbReference>
<dbReference type="EvolutionaryTrace" id="P0AC13"/>
<dbReference type="PRO" id="PR:P0AC13"/>
<dbReference type="Proteomes" id="UP000000625">
    <property type="component" value="Chromosome"/>
</dbReference>
<dbReference type="GO" id="GO:0005737">
    <property type="term" value="C:cytoplasm"/>
    <property type="evidence" value="ECO:0000314"/>
    <property type="project" value="EcoCyc"/>
</dbReference>
<dbReference type="GO" id="GO:0005829">
    <property type="term" value="C:cytosol"/>
    <property type="evidence" value="ECO:0000314"/>
    <property type="project" value="EcoCyc"/>
</dbReference>
<dbReference type="GO" id="GO:0004156">
    <property type="term" value="F:dihydropteroate synthase activity"/>
    <property type="evidence" value="ECO:0000314"/>
    <property type="project" value="EcoliWiki"/>
</dbReference>
<dbReference type="GO" id="GO:0046872">
    <property type="term" value="F:metal ion binding"/>
    <property type="evidence" value="ECO:0007669"/>
    <property type="project" value="UniProtKB-KW"/>
</dbReference>
<dbReference type="GO" id="GO:0046656">
    <property type="term" value="P:folic acid biosynthetic process"/>
    <property type="evidence" value="ECO:0000315"/>
    <property type="project" value="EcoCyc"/>
</dbReference>
<dbReference type="GO" id="GO:0009410">
    <property type="term" value="P:response to xenobiotic stimulus"/>
    <property type="evidence" value="ECO:0000315"/>
    <property type="project" value="EcoliWiki"/>
</dbReference>
<dbReference type="GO" id="GO:0046654">
    <property type="term" value="P:tetrahydrofolate biosynthetic process"/>
    <property type="evidence" value="ECO:0000318"/>
    <property type="project" value="GO_Central"/>
</dbReference>
<dbReference type="CDD" id="cd00739">
    <property type="entry name" value="DHPS"/>
    <property type="match status" value="1"/>
</dbReference>
<dbReference type="FunFam" id="3.20.20.20:FF:000004">
    <property type="entry name" value="Dihydropteroate synthase"/>
    <property type="match status" value="1"/>
</dbReference>
<dbReference type="Gene3D" id="3.20.20.20">
    <property type="entry name" value="Dihydropteroate synthase-like"/>
    <property type="match status" value="1"/>
</dbReference>
<dbReference type="InterPro" id="IPR045031">
    <property type="entry name" value="DHP_synth-like"/>
</dbReference>
<dbReference type="InterPro" id="IPR006390">
    <property type="entry name" value="DHP_synth_dom"/>
</dbReference>
<dbReference type="InterPro" id="IPR011005">
    <property type="entry name" value="Dihydropteroate_synth-like_sf"/>
</dbReference>
<dbReference type="InterPro" id="IPR000489">
    <property type="entry name" value="Pterin-binding_dom"/>
</dbReference>
<dbReference type="NCBIfam" id="TIGR01496">
    <property type="entry name" value="DHPS"/>
    <property type="match status" value="1"/>
</dbReference>
<dbReference type="NCBIfam" id="NF008625">
    <property type="entry name" value="PRK11613.1"/>
    <property type="match status" value="1"/>
</dbReference>
<dbReference type="PANTHER" id="PTHR20941">
    <property type="entry name" value="FOLATE SYNTHESIS PROTEINS"/>
    <property type="match status" value="1"/>
</dbReference>
<dbReference type="PANTHER" id="PTHR20941:SF1">
    <property type="entry name" value="FOLIC ACID SYNTHESIS PROTEIN FOL1"/>
    <property type="match status" value="1"/>
</dbReference>
<dbReference type="Pfam" id="PF00809">
    <property type="entry name" value="Pterin_bind"/>
    <property type="match status" value="1"/>
</dbReference>
<dbReference type="SUPFAM" id="SSF51717">
    <property type="entry name" value="Dihydropteroate synthetase-like"/>
    <property type="match status" value="1"/>
</dbReference>
<dbReference type="PROSITE" id="PS00792">
    <property type="entry name" value="DHPS_1"/>
    <property type="match status" value="1"/>
</dbReference>
<dbReference type="PROSITE" id="PS00793">
    <property type="entry name" value="DHPS_2"/>
    <property type="match status" value="1"/>
</dbReference>
<dbReference type="PROSITE" id="PS50972">
    <property type="entry name" value="PTERIN_BINDING"/>
    <property type="match status" value="1"/>
</dbReference>
<sequence>MKLFAQGTSLDLSHPHVMGILNVTPDSFSDGGTHNSLIDAVKHANLMINAGATIIDVGGESTRPGAAEVSVEEELQRVIPVVEAIAQRFEVWISVDTSKPEVIRESAKVGAHIINDIRSLSEPGALEAAAETGLPVCLMHMQGNPKTMQEAPKYDDVFAEVNRYFIEQIARCEQAGIAKEKLLLDPGFGFGKNLSHNYSLLARLAEFHHFNLPLLVGMSRKSMIGQLLNVGPSERLSGSLACAVIAAMQGAHIIRVHDVKETVEAMRVVEATLSAKENKRYE</sequence>
<organism>
    <name type="scientific">Escherichia coli (strain K12)</name>
    <dbReference type="NCBI Taxonomy" id="83333"/>
    <lineage>
        <taxon>Bacteria</taxon>
        <taxon>Pseudomonadati</taxon>
        <taxon>Pseudomonadota</taxon>
        <taxon>Gammaproteobacteria</taxon>
        <taxon>Enterobacterales</taxon>
        <taxon>Enterobacteriaceae</taxon>
        <taxon>Escherichia</taxon>
    </lineage>
</organism>
<evidence type="ECO:0000250" key="1">
    <source>
        <dbReference type="UniProtKB" id="P9WND1"/>
    </source>
</evidence>
<evidence type="ECO:0000255" key="2">
    <source>
        <dbReference type="PROSITE-ProRule" id="PRU00334"/>
    </source>
</evidence>
<evidence type="ECO:0000269" key="3">
    <source>
    </source>
</evidence>
<evidence type="ECO:0000269" key="4">
    <source>
    </source>
</evidence>
<evidence type="ECO:0000269" key="5">
    <source>
    </source>
</evidence>
<evidence type="ECO:0000269" key="6">
    <source>
    </source>
</evidence>
<evidence type="ECO:0000269" key="7">
    <source>
    </source>
</evidence>
<evidence type="ECO:0000303" key="8">
    <source>
    </source>
</evidence>
<evidence type="ECO:0000303" key="9">
    <source>
    </source>
</evidence>
<evidence type="ECO:0000305" key="10"/>
<evidence type="ECO:0000305" key="11">
    <source>
    </source>
</evidence>
<evidence type="ECO:0007744" key="12">
    <source>
        <dbReference type="PDB" id="1AJ2"/>
    </source>
</evidence>
<evidence type="ECO:0007744" key="13">
    <source>
        <dbReference type="PDB" id="5U0V"/>
    </source>
</evidence>
<evidence type="ECO:0007744" key="14">
    <source>
        <dbReference type="PDB" id="5U0W"/>
    </source>
</evidence>
<evidence type="ECO:0007744" key="15">
    <source>
        <dbReference type="PDB" id="5U0Y"/>
    </source>
</evidence>
<evidence type="ECO:0007744" key="16">
    <source>
        <dbReference type="PDB" id="5U0Z"/>
    </source>
</evidence>
<evidence type="ECO:0007744" key="17">
    <source>
        <dbReference type="PDB" id="5U10"/>
    </source>
</evidence>
<evidence type="ECO:0007744" key="18">
    <source>
        <dbReference type="PDB" id="5U11"/>
    </source>
</evidence>
<evidence type="ECO:0007744" key="19">
    <source>
        <dbReference type="PDB" id="5U12"/>
    </source>
</evidence>
<evidence type="ECO:0007744" key="20">
    <source>
        <dbReference type="PDB" id="5U13"/>
    </source>
</evidence>
<evidence type="ECO:0007744" key="21">
    <source>
        <dbReference type="PDB" id="5U14"/>
    </source>
</evidence>
<evidence type="ECO:0007744" key="22">
    <source>
        <dbReference type="PDB" id="5V79"/>
    </source>
</evidence>
<evidence type="ECO:0007744" key="23">
    <source>
        <dbReference type="PDB" id="5V7A"/>
    </source>
</evidence>
<evidence type="ECO:0007744" key="24">
    <source>
        <dbReference type="PDB" id="7TQ1"/>
    </source>
</evidence>
<evidence type="ECO:0007829" key="25">
    <source>
        <dbReference type="PDB" id="1AJ0"/>
    </source>
</evidence>
<evidence type="ECO:0007829" key="26">
    <source>
        <dbReference type="PDB" id="5U0V"/>
    </source>
</evidence>
<evidence type="ECO:0007829" key="27">
    <source>
        <dbReference type="PDB" id="5U12"/>
    </source>
</evidence>
<evidence type="ECO:0007829" key="28">
    <source>
        <dbReference type="PDB" id="5V7A"/>
    </source>
</evidence>
<protein>
    <recommendedName>
        <fullName evidence="8">Dihydropteroate synthase</fullName>
        <shortName evidence="8">DHPS</shortName>
        <ecNumber evidence="4 5">2.5.1.15</ecNumber>
    </recommendedName>
    <alternativeName>
        <fullName>Dihydropteroate pyrophosphorylase</fullName>
    </alternativeName>
</protein>
<comment type="function">
    <text evidence="4 5">Catalyzes the condensation of para-aminobenzoate (pABA) with 6-hydroxymethyl-7,8-dihydropterin diphosphate (DHPt-PP) to form 7,8-dihydropteroate (H2Pte), the immediate precursor of folate derivatives.</text>
</comment>
<comment type="catalytic activity">
    <reaction evidence="4 5 6">
        <text>(7,8-dihydropterin-6-yl)methyl diphosphate + 4-aminobenzoate = 7,8-dihydropteroate + diphosphate</text>
        <dbReference type="Rhea" id="RHEA:19949"/>
        <dbReference type="ChEBI" id="CHEBI:17836"/>
        <dbReference type="ChEBI" id="CHEBI:17839"/>
        <dbReference type="ChEBI" id="CHEBI:33019"/>
        <dbReference type="ChEBI" id="CHEBI:72950"/>
        <dbReference type="EC" id="2.5.1.15"/>
    </reaction>
</comment>
<comment type="cofactor">
    <cofactor evidence="6">
        <name>Mg(2+)</name>
        <dbReference type="ChEBI" id="CHEBI:18420"/>
    </cofactor>
    <text evidence="6 10">Magnesium is required for activity, even if it seems to interact primarily with the substrate.</text>
</comment>
<comment type="activity regulation">
    <text evidence="3 5">Sulfonamide drugs, for example sulfamethoxazole, act as competitive inhibitors of dihydropteroate synthase activity (PubMed:37419898). Inhibited by 8-mercaptoguanine (8MG) derivatives (PubMed:29171692).</text>
</comment>
<comment type="biophysicochemical properties">
    <kinetics>
        <KM evidence="5">7.8 uM for 4-aminobenzoate (at pH 7.5 and 37 degrees Celsius)</KM>
        <KM evidence="6">2.5 uM for 4-aminobenzoate</KM>
        <KM evidence="5">7.67 uM for sulfamethoxazole (at pH 7.5 and 37 degrees Celsius)</KM>
        <text evidence="5">kcat is 0.38 sec(-1) for 4-aminobenzoate as substrate (at pH 7.5 and 37 degrees Celsius) (PubMed:37419898). kcat is 0.46 sec(-1) for sulfamethoxazole as substrate (at pH 7.5 and 37 degrees Celsius) (PubMed:37419898).</text>
    </kinetics>
    <phDependence>
        <text evidence="6">Optimum pH is 8.5.</text>
    </phDependence>
</comment>
<comment type="pathway">
    <text>Cofactor biosynthesis; tetrahydrofolate biosynthesis; 7,8-dihydrofolate from 2-amino-4-hydroxy-6-hydroxymethyl-7,8-dihydropteridine diphosphate and 4-aminobenzoate: step 1/2.</text>
</comment>
<comment type="subunit">
    <text evidence="6 7">Homodimer.</text>
</comment>
<comment type="similarity">
    <text evidence="10">Belongs to the DHPS family.</text>
</comment>
<comment type="sequence caution" evidence="10">
    <conflict type="erroneous initiation">
        <sequence resource="EMBL-CDS" id="AAA57978"/>
    </conflict>
    <text>Extended N-terminus.</text>
</comment>
<name>DHPS_ECOLI</name>
<gene>
    <name evidence="9" type="primary">folP</name>
    <name type="synonym">dhpS</name>
    <name type="ordered locus">b3177</name>
    <name type="ordered locus">JW3144</name>
</gene>
<proteinExistence type="evidence at protein level"/>
<feature type="chain" id="PRO_0000168207" description="Dihydropteroate synthase">
    <location>
        <begin position="1"/>
        <end position="282"/>
    </location>
</feature>
<feature type="domain" description="Pterin-binding" evidence="2">
    <location>
        <begin position="15"/>
        <end position="267"/>
    </location>
</feature>
<feature type="binding site" evidence="1">
    <location>
        <position position="22"/>
    </location>
    <ligand>
        <name>Mg(2+)</name>
        <dbReference type="ChEBI" id="CHEBI:18420"/>
    </ligand>
</feature>
<feature type="binding site" evidence="11 12">
    <location>
        <position position="62"/>
    </location>
    <ligand>
        <name>(7,8-dihydropterin-6-yl)methyl diphosphate</name>
        <dbReference type="ChEBI" id="CHEBI:72950"/>
    </ligand>
</feature>
<feature type="binding site" evidence="11 12">
    <location>
        <position position="96"/>
    </location>
    <ligand>
        <name>(7,8-dihydropterin-6-yl)methyl diphosphate</name>
        <dbReference type="ChEBI" id="CHEBI:72950"/>
    </ligand>
</feature>
<feature type="binding site" evidence="11 12">
    <location>
        <position position="115"/>
    </location>
    <ligand>
        <name>(7,8-dihydropterin-6-yl)methyl diphosphate</name>
        <dbReference type="ChEBI" id="CHEBI:72950"/>
    </ligand>
</feature>
<feature type="binding site" evidence="5 24">
    <location>
        <position position="115"/>
    </location>
    <ligand>
        <name>6-hydroxymethyl-7,8-dihydropterin</name>
        <dbReference type="ChEBI" id="CHEBI:44841"/>
    </ligand>
</feature>
<feature type="binding site" evidence="11 12">
    <location>
        <position position="185"/>
    </location>
    <ligand>
        <name>(7,8-dihydropterin-6-yl)methyl diphosphate</name>
        <dbReference type="ChEBI" id="CHEBI:72950"/>
    </ligand>
</feature>
<feature type="binding site" evidence="5 24">
    <location>
        <position position="185"/>
    </location>
    <ligand>
        <name>6-hydroxymethyl-7,8-dihydropterin</name>
        <dbReference type="ChEBI" id="CHEBI:44841"/>
    </ligand>
</feature>
<feature type="binding site" evidence="11 12">
    <location>
        <position position="221"/>
    </location>
    <ligand>
        <name>(7,8-dihydropterin-6-yl)methyl diphosphate</name>
        <dbReference type="ChEBI" id="CHEBI:72950"/>
    </ligand>
</feature>
<feature type="binding site" evidence="5 24">
    <location>
        <position position="223"/>
    </location>
    <ligand>
        <name>6-hydroxymethyl-7,8-dihydropterin</name>
        <dbReference type="ChEBI" id="CHEBI:44841"/>
    </ligand>
</feature>
<feature type="binding site" evidence="11 12">
    <location>
        <begin position="255"/>
        <end position="257"/>
    </location>
    <ligand>
        <name>(7,8-dihydropterin-6-yl)methyl diphosphate</name>
        <dbReference type="ChEBI" id="CHEBI:72950"/>
    </ligand>
</feature>
<feature type="sequence variant" description="In TS20; resistant to sulfonamide and temperature-sensitive.">
    <original>F</original>
    <variation>I</variation>
    <location>
        <position position="28"/>
    </location>
</feature>
<feature type="mutagenesis site" description="Increases resistance to some sulfonamide antibiotics, including sulfanilamide (SAA) in E.coli strain BW25113." evidence="5">
    <original>T</original>
    <variation>A</variation>
    <location>
        <position position="62"/>
    </location>
</feature>
<feature type="mutagenesis site" description="Increases resistance to some sulfonamide antibiotics, including sulfanilamide (SAA) in E.coli strain BW25113." evidence="5">
    <original>G</original>
    <variation>GFG</variation>
    <location>
        <position position="189"/>
    </location>
</feature>
<feature type="sequence conflict" description="In Ref. 6; AA sequence." evidence="10" ref="6">
    <original>Q</original>
    <variation>E</variation>
    <location>
        <position position="6"/>
    </location>
</feature>
<feature type="sequence conflict" description="In Ref. 3; AAA97509." evidence="10" ref="3">
    <original>R</original>
    <variation>A</variation>
    <location>
        <position position="77"/>
    </location>
</feature>
<feature type="strand" evidence="26">
    <location>
        <begin position="2"/>
        <end position="5"/>
    </location>
</feature>
<feature type="strand" evidence="26">
    <location>
        <begin position="8"/>
        <end position="11"/>
    </location>
</feature>
<feature type="strand" evidence="26">
    <location>
        <begin position="16"/>
        <end position="22"/>
    </location>
</feature>
<feature type="turn" evidence="25">
    <location>
        <begin position="25"/>
        <end position="27"/>
    </location>
</feature>
<feature type="helix" evidence="25">
    <location>
        <begin position="29"/>
        <end position="33"/>
    </location>
</feature>
<feature type="helix" evidence="26">
    <location>
        <begin position="36"/>
        <end position="49"/>
    </location>
</feature>
<feature type="strand" evidence="26">
    <location>
        <begin position="53"/>
        <end position="58"/>
    </location>
</feature>
<feature type="strand" evidence="28">
    <location>
        <begin position="63"/>
        <end position="65"/>
    </location>
</feature>
<feature type="helix" evidence="26">
    <location>
        <begin position="71"/>
        <end position="88"/>
    </location>
</feature>
<feature type="strand" evidence="26">
    <location>
        <begin position="92"/>
        <end position="96"/>
    </location>
</feature>
<feature type="helix" evidence="26">
    <location>
        <begin position="100"/>
        <end position="108"/>
    </location>
</feature>
<feature type="strand" evidence="26">
    <location>
        <begin position="113"/>
        <end position="116"/>
    </location>
</feature>
<feature type="turn" evidence="26">
    <location>
        <begin position="117"/>
        <end position="120"/>
    </location>
</feature>
<feature type="helix" evidence="26">
    <location>
        <begin position="125"/>
        <end position="132"/>
    </location>
</feature>
<feature type="strand" evidence="26">
    <location>
        <begin position="136"/>
        <end position="139"/>
    </location>
</feature>
<feature type="turn" evidence="27">
    <location>
        <begin position="145"/>
        <end position="149"/>
    </location>
</feature>
<feature type="helix" evidence="26">
    <location>
        <begin position="157"/>
        <end position="174"/>
    </location>
</feature>
<feature type="helix" evidence="26">
    <location>
        <begin position="179"/>
        <end position="181"/>
    </location>
</feature>
<feature type="strand" evidence="26">
    <location>
        <begin position="182"/>
        <end position="185"/>
    </location>
</feature>
<feature type="helix" evidence="26">
    <location>
        <begin position="194"/>
        <end position="202"/>
    </location>
</feature>
<feature type="helix" evidence="26">
    <location>
        <begin position="204"/>
        <end position="210"/>
    </location>
</feature>
<feature type="strand" evidence="26">
    <location>
        <begin position="214"/>
        <end position="217"/>
    </location>
</feature>
<feature type="helix" evidence="26">
    <location>
        <begin position="222"/>
        <end position="228"/>
    </location>
</feature>
<feature type="helix" evidence="26">
    <location>
        <begin position="232"/>
        <end position="234"/>
    </location>
</feature>
<feature type="helix" evidence="26">
    <location>
        <begin position="236"/>
        <end position="248"/>
    </location>
</feature>
<feature type="strand" evidence="26">
    <location>
        <begin position="252"/>
        <end position="257"/>
    </location>
</feature>
<feature type="helix" evidence="26">
    <location>
        <begin position="259"/>
        <end position="275"/>
    </location>
</feature>
<feature type="strand" evidence="27">
    <location>
        <begin position="276"/>
        <end position="280"/>
    </location>
</feature>